<name>UPP_SALA4</name>
<protein>
    <recommendedName>
        <fullName evidence="1">Uracil phosphoribosyltransferase</fullName>
        <ecNumber evidence="1">2.4.2.9</ecNumber>
    </recommendedName>
    <alternativeName>
        <fullName evidence="1">UMP pyrophosphorylase</fullName>
    </alternativeName>
    <alternativeName>
        <fullName evidence="1">UPRTase</fullName>
    </alternativeName>
</protein>
<accession>B5F173</accession>
<gene>
    <name evidence="1" type="primary">upp</name>
    <name type="ordered locus">SeAg_B2645</name>
</gene>
<sequence>MKIVEVKHPLVKHKLGLMRENDISTKRFRELASEVGSLLTYEATADLETEKVTIEGWNGPVEIDQIKGKKITVVPILRAGLGMMEGVLENVPSARISVVGMYRNEETLEPVPYFQKLVSNIDERMALIVDPMLATGGSVIATIDLLKKAGCSSIKVLVLVAAPEGIAALEKAHPDVELYTASIDQGLNEHGYIIPGLGDAGDKIFGTK</sequence>
<evidence type="ECO:0000255" key="1">
    <source>
        <dbReference type="HAMAP-Rule" id="MF_01218"/>
    </source>
</evidence>
<comment type="function">
    <text evidence="1">Catalyzes the conversion of uracil and 5-phospho-alpha-D-ribose 1-diphosphate (PRPP) to UMP and diphosphate.</text>
</comment>
<comment type="catalytic activity">
    <reaction evidence="1">
        <text>UMP + diphosphate = 5-phospho-alpha-D-ribose 1-diphosphate + uracil</text>
        <dbReference type="Rhea" id="RHEA:13017"/>
        <dbReference type="ChEBI" id="CHEBI:17568"/>
        <dbReference type="ChEBI" id="CHEBI:33019"/>
        <dbReference type="ChEBI" id="CHEBI:57865"/>
        <dbReference type="ChEBI" id="CHEBI:58017"/>
        <dbReference type="EC" id="2.4.2.9"/>
    </reaction>
</comment>
<comment type="cofactor">
    <cofactor evidence="1">
        <name>Mg(2+)</name>
        <dbReference type="ChEBI" id="CHEBI:18420"/>
    </cofactor>
    <text evidence="1">Binds 1 Mg(2+) ion per subunit. The magnesium is bound as Mg-PRPP.</text>
</comment>
<comment type="activity regulation">
    <text evidence="1">Allosterically activated by GTP.</text>
</comment>
<comment type="pathway">
    <text evidence="1">Pyrimidine metabolism; UMP biosynthesis via salvage pathway; UMP from uracil: step 1/1.</text>
</comment>
<comment type="similarity">
    <text evidence="1">Belongs to the UPRTase family.</text>
</comment>
<feature type="chain" id="PRO_1000139154" description="Uracil phosphoribosyltransferase">
    <location>
        <begin position="1"/>
        <end position="208"/>
    </location>
</feature>
<feature type="binding site" evidence="1">
    <location>
        <position position="78"/>
    </location>
    <ligand>
        <name>5-phospho-alpha-D-ribose 1-diphosphate</name>
        <dbReference type="ChEBI" id="CHEBI:58017"/>
    </ligand>
</feature>
<feature type="binding site" evidence="1">
    <location>
        <position position="103"/>
    </location>
    <ligand>
        <name>5-phospho-alpha-D-ribose 1-diphosphate</name>
        <dbReference type="ChEBI" id="CHEBI:58017"/>
    </ligand>
</feature>
<feature type="binding site" evidence="1">
    <location>
        <begin position="130"/>
        <end position="138"/>
    </location>
    <ligand>
        <name>5-phospho-alpha-D-ribose 1-diphosphate</name>
        <dbReference type="ChEBI" id="CHEBI:58017"/>
    </ligand>
</feature>
<feature type="binding site" evidence="1">
    <location>
        <position position="193"/>
    </location>
    <ligand>
        <name>uracil</name>
        <dbReference type="ChEBI" id="CHEBI:17568"/>
    </ligand>
</feature>
<feature type="binding site" evidence="1">
    <location>
        <begin position="198"/>
        <end position="200"/>
    </location>
    <ligand>
        <name>uracil</name>
        <dbReference type="ChEBI" id="CHEBI:17568"/>
    </ligand>
</feature>
<feature type="binding site" evidence="1">
    <location>
        <position position="199"/>
    </location>
    <ligand>
        <name>5-phospho-alpha-D-ribose 1-diphosphate</name>
        <dbReference type="ChEBI" id="CHEBI:58017"/>
    </ligand>
</feature>
<dbReference type="EC" id="2.4.2.9" evidence="1"/>
<dbReference type="EMBL" id="CP001138">
    <property type="protein sequence ID" value="ACH49687.1"/>
    <property type="molecule type" value="Genomic_DNA"/>
</dbReference>
<dbReference type="RefSeq" id="WP_000706208.1">
    <property type="nucleotide sequence ID" value="NC_011149.1"/>
</dbReference>
<dbReference type="SMR" id="B5F173"/>
<dbReference type="KEGG" id="sea:SeAg_B2645"/>
<dbReference type="HOGENOM" id="CLU_067096_2_2_6"/>
<dbReference type="UniPathway" id="UPA00574">
    <property type="reaction ID" value="UER00636"/>
</dbReference>
<dbReference type="Proteomes" id="UP000008819">
    <property type="component" value="Chromosome"/>
</dbReference>
<dbReference type="GO" id="GO:0005525">
    <property type="term" value="F:GTP binding"/>
    <property type="evidence" value="ECO:0007669"/>
    <property type="project" value="UniProtKB-KW"/>
</dbReference>
<dbReference type="GO" id="GO:0000287">
    <property type="term" value="F:magnesium ion binding"/>
    <property type="evidence" value="ECO:0007669"/>
    <property type="project" value="UniProtKB-UniRule"/>
</dbReference>
<dbReference type="GO" id="GO:0004845">
    <property type="term" value="F:uracil phosphoribosyltransferase activity"/>
    <property type="evidence" value="ECO:0007669"/>
    <property type="project" value="UniProtKB-UniRule"/>
</dbReference>
<dbReference type="GO" id="GO:0044206">
    <property type="term" value="P:UMP salvage"/>
    <property type="evidence" value="ECO:0007669"/>
    <property type="project" value="UniProtKB-UniRule"/>
</dbReference>
<dbReference type="GO" id="GO:0006223">
    <property type="term" value="P:uracil salvage"/>
    <property type="evidence" value="ECO:0007669"/>
    <property type="project" value="InterPro"/>
</dbReference>
<dbReference type="CDD" id="cd06223">
    <property type="entry name" value="PRTases_typeI"/>
    <property type="match status" value="1"/>
</dbReference>
<dbReference type="FunFam" id="3.40.50.2020:FF:000003">
    <property type="entry name" value="Uracil phosphoribosyltransferase"/>
    <property type="match status" value="1"/>
</dbReference>
<dbReference type="Gene3D" id="3.40.50.2020">
    <property type="match status" value="1"/>
</dbReference>
<dbReference type="HAMAP" id="MF_01218_B">
    <property type="entry name" value="Upp_B"/>
    <property type="match status" value="1"/>
</dbReference>
<dbReference type="InterPro" id="IPR000836">
    <property type="entry name" value="PRibTrfase_dom"/>
</dbReference>
<dbReference type="InterPro" id="IPR029057">
    <property type="entry name" value="PRTase-like"/>
</dbReference>
<dbReference type="InterPro" id="IPR034332">
    <property type="entry name" value="Upp_B"/>
</dbReference>
<dbReference type="InterPro" id="IPR050054">
    <property type="entry name" value="UPRTase/APRTase"/>
</dbReference>
<dbReference type="InterPro" id="IPR005765">
    <property type="entry name" value="Ura_phspho_trans"/>
</dbReference>
<dbReference type="NCBIfam" id="NF001097">
    <property type="entry name" value="PRK00129.1"/>
    <property type="match status" value="1"/>
</dbReference>
<dbReference type="NCBIfam" id="TIGR01091">
    <property type="entry name" value="upp"/>
    <property type="match status" value="1"/>
</dbReference>
<dbReference type="PANTHER" id="PTHR32315">
    <property type="entry name" value="ADENINE PHOSPHORIBOSYLTRANSFERASE"/>
    <property type="match status" value="1"/>
</dbReference>
<dbReference type="PANTHER" id="PTHR32315:SF4">
    <property type="entry name" value="URACIL PHOSPHORIBOSYLTRANSFERASE, CHLOROPLASTIC"/>
    <property type="match status" value="1"/>
</dbReference>
<dbReference type="Pfam" id="PF14681">
    <property type="entry name" value="UPRTase"/>
    <property type="match status" value="1"/>
</dbReference>
<dbReference type="SUPFAM" id="SSF53271">
    <property type="entry name" value="PRTase-like"/>
    <property type="match status" value="1"/>
</dbReference>
<organism>
    <name type="scientific">Salmonella agona (strain SL483)</name>
    <dbReference type="NCBI Taxonomy" id="454166"/>
    <lineage>
        <taxon>Bacteria</taxon>
        <taxon>Pseudomonadati</taxon>
        <taxon>Pseudomonadota</taxon>
        <taxon>Gammaproteobacteria</taxon>
        <taxon>Enterobacterales</taxon>
        <taxon>Enterobacteriaceae</taxon>
        <taxon>Salmonella</taxon>
    </lineage>
</organism>
<reference key="1">
    <citation type="journal article" date="2011" name="J. Bacteriol.">
        <title>Comparative genomics of 28 Salmonella enterica isolates: evidence for CRISPR-mediated adaptive sublineage evolution.</title>
        <authorList>
            <person name="Fricke W.F."/>
            <person name="Mammel M.K."/>
            <person name="McDermott P.F."/>
            <person name="Tartera C."/>
            <person name="White D.G."/>
            <person name="Leclerc J.E."/>
            <person name="Ravel J."/>
            <person name="Cebula T.A."/>
        </authorList>
    </citation>
    <scope>NUCLEOTIDE SEQUENCE [LARGE SCALE GENOMIC DNA]</scope>
    <source>
        <strain>SL483</strain>
    </source>
</reference>
<proteinExistence type="inferred from homology"/>
<keyword id="KW-0021">Allosteric enzyme</keyword>
<keyword id="KW-0328">Glycosyltransferase</keyword>
<keyword id="KW-0342">GTP-binding</keyword>
<keyword id="KW-0460">Magnesium</keyword>
<keyword id="KW-0547">Nucleotide-binding</keyword>
<keyword id="KW-0808">Transferase</keyword>